<dbReference type="EC" id="2.7.11.1" evidence="3"/>
<dbReference type="EMBL" id="D26185">
    <property type="protein sequence ID" value="BAA05301.1"/>
    <property type="status" value="ALT_INIT"/>
    <property type="molecule type" value="Genomic_DNA"/>
</dbReference>
<dbReference type="EMBL" id="AL009126">
    <property type="protein sequence ID" value="CAB11842.2"/>
    <property type="molecule type" value="Genomic_DNA"/>
</dbReference>
<dbReference type="PIR" id="S66096">
    <property type="entry name" value="S66096"/>
</dbReference>
<dbReference type="RefSeq" id="WP_009966278.1">
    <property type="nucleotide sequence ID" value="NZ_OZ025638.1"/>
</dbReference>
<dbReference type="PDB" id="6G4J">
    <property type="method" value="X-ray"/>
    <property type="resolution" value="1.60 A"/>
    <property type="chains" value="A=1-315"/>
</dbReference>
<dbReference type="PDBsum" id="6G4J"/>
<dbReference type="SMR" id="P37562"/>
<dbReference type="FunCoup" id="P37562">
    <property type="interactions" value="14"/>
</dbReference>
<dbReference type="IntAct" id="P37562">
    <property type="interactions" value="40"/>
</dbReference>
<dbReference type="STRING" id="224308.BSU00660"/>
<dbReference type="PaxDb" id="224308-BSU00660"/>
<dbReference type="EnsemblBacteria" id="CAB11842">
    <property type="protein sequence ID" value="CAB11842"/>
    <property type="gene ID" value="BSU_00660"/>
</dbReference>
<dbReference type="GeneID" id="936964"/>
<dbReference type="KEGG" id="bsu:BSU00660"/>
<dbReference type="PATRIC" id="fig|224308.179.peg.66"/>
<dbReference type="eggNOG" id="COG0515">
    <property type="taxonomic scope" value="Bacteria"/>
</dbReference>
<dbReference type="InParanoid" id="P37562"/>
<dbReference type="OrthoDB" id="583109at2"/>
<dbReference type="BioCyc" id="BSUB:BSU00660-MONOMER"/>
<dbReference type="Proteomes" id="UP000001570">
    <property type="component" value="Chromosome"/>
</dbReference>
<dbReference type="GO" id="GO:0005524">
    <property type="term" value="F:ATP binding"/>
    <property type="evidence" value="ECO:0007669"/>
    <property type="project" value="UniProtKB-KW"/>
</dbReference>
<dbReference type="GO" id="GO:0106310">
    <property type="term" value="F:protein serine kinase activity"/>
    <property type="evidence" value="ECO:0007669"/>
    <property type="project" value="RHEA"/>
</dbReference>
<dbReference type="GO" id="GO:0004674">
    <property type="term" value="F:protein serine/threonine kinase activity"/>
    <property type="evidence" value="ECO:0007669"/>
    <property type="project" value="UniProtKB-KW"/>
</dbReference>
<dbReference type="FunFam" id="1.10.510.10:FF:001446">
    <property type="entry name" value="Probable serine/threonine-protein kinase YabT"/>
    <property type="match status" value="1"/>
</dbReference>
<dbReference type="Gene3D" id="3.30.200.20">
    <property type="entry name" value="Phosphorylase Kinase, domain 1"/>
    <property type="match status" value="1"/>
</dbReference>
<dbReference type="Gene3D" id="1.10.510.10">
    <property type="entry name" value="Transferase(Phosphotransferase) domain 1"/>
    <property type="match status" value="1"/>
</dbReference>
<dbReference type="InterPro" id="IPR011009">
    <property type="entry name" value="Kinase-like_dom_sf"/>
</dbReference>
<dbReference type="InterPro" id="IPR000719">
    <property type="entry name" value="Prot_kinase_dom"/>
</dbReference>
<dbReference type="InterPro" id="IPR017441">
    <property type="entry name" value="Protein_kinase_ATP_BS"/>
</dbReference>
<dbReference type="PANTHER" id="PTHR44167">
    <property type="entry name" value="OVARIAN-SPECIFIC SERINE/THREONINE-PROTEIN KINASE LOK-RELATED"/>
    <property type="match status" value="1"/>
</dbReference>
<dbReference type="PANTHER" id="PTHR44167:SF31">
    <property type="entry name" value="PROTEIN CBG02007"/>
    <property type="match status" value="1"/>
</dbReference>
<dbReference type="Pfam" id="PF00069">
    <property type="entry name" value="Pkinase"/>
    <property type="match status" value="1"/>
</dbReference>
<dbReference type="SMART" id="SM00220">
    <property type="entry name" value="S_TKc"/>
    <property type="match status" value="1"/>
</dbReference>
<dbReference type="SUPFAM" id="SSF56112">
    <property type="entry name" value="Protein kinase-like (PK-like)"/>
    <property type="match status" value="1"/>
</dbReference>
<dbReference type="PROSITE" id="PS00107">
    <property type="entry name" value="PROTEIN_KINASE_ATP"/>
    <property type="match status" value="1"/>
</dbReference>
<dbReference type="PROSITE" id="PS50011">
    <property type="entry name" value="PROTEIN_KINASE_DOM"/>
    <property type="match status" value="1"/>
</dbReference>
<sequence>MMNDALTSLACSLKPGTTIKGKWNGNTYTLRKQLGKGANGIVYLAETSDGHVALKVSDDSLSITSEVNVLKSFSKAQSVTMGPSFFDTDDAYIPSANTKVSFYAMEYIKGPLLLKYVSDKGAEWIPVLMIQLLSSLSVLHQQGWIFGDLKPDNLIVTGPPARIRCIDVGGTTKEGRAIKEYTEFYDRGYWGYGTRKAEPSYDLFAVAMIMINSVHKKEFKKTNQPKEQLRSLIEGNPLLQKYKKALFSALNGDYQSADEMKKDMLDAGQKAAQRKQPIKASPQPATRQRQQKPRQGKITKTRYTPKQKPAKSGGLFETTLIVISVLALYFAYIIFFLI</sequence>
<name>PKN1_BACSU</name>
<organism>
    <name type="scientific">Bacillus subtilis (strain 168)</name>
    <dbReference type="NCBI Taxonomy" id="224308"/>
    <lineage>
        <taxon>Bacteria</taxon>
        <taxon>Bacillati</taxon>
        <taxon>Bacillota</taxon>
        <taxon>Bacilli</taxon>
        <taxon>Bacillales</taxon>
        <taxon>Bacillaceae</taxon>
        <taxon>Bacillus</taxon>
    </lineage>
</organism>
<keyword id="KW-0002">3D-structure</keyword>
<keyword id="KW-0067">ATP-binding</keyword>
<keyword id="KW-0418">Kinase</keyword>
<keyword id="KW-0547">Nucleotide-binding</keyword>
<keyword id="KW-0597">Phosphoprotein</keyword>
<keyword id="KW-1185">Reference proteome</keyword>
<keyword id="KW-0723">Serine/threonine-protein kinase</keyword>
<keyword id="KW-0808">Transferase</keyword>
<reference key="1">
    <citation type="journal article" date="1994" name="DNA Res.">
        <title>Systematic sequencing of the 180 kilobase region of the Bacillus subtilis chromosome containing the replication origin.</title>
        <authorList>
            <person name="Ogasawara N."/>
            <person name="Nakai S."/>
            <person name="Yoshikawa H."/>
        </authorList>
    </citation>
    <scope>NUCLEOTIDE SEQUENCE [GENOMIC DNA]</scope>
    <source>
        <strain>168</strain>
    </source>
</reference>
<reference key="2">
    <citation type="journal article" date="1997" name="Nature">
        <title>The complete genome sequence of the Gram-positive bacterium Bacillus subtilis.</title>
        <authorList>
            <person name="Kunst F."/>
            <person name="Ogasawara N."/>
            <person name="Moszer I."/>
            <person name="Albertini A.M."/>
            <person name="Alloni G."/>
            <person name="Azevedo V."/>
            <person name="Bertero M.G."/>
            <person name="Bessieres P."/>
            <person name="Bolotin A."/>
            <person name="Borchert S."/>
            <person name="Borriss R."/>
            <person name="Boursier L."/>
            <person name="Brans A."/>
            <person name="Braun M."/>
            <person name="Brignell S.C."/>
            <person name="Bron S."/>
            <person name="Brouillet S."/>
            <person name="Bruschi C.V."/>
            <person name="Caldwell B."/>
            <person name="Capuano V."/>
            <person name="Carter N.M."/>
            <person name="Choi S.-K."/>
            <person name="Codani J.-J."/>
            <person name="Connerton I.F."/>
            <person name="Cummings N.J."/>
            <person name="Daniel R.A."/>
            <person name="Denizot F."/>
            <person name="Devine K.M."/>
            <person name="Duesterhoeft A."/>
            <person name="Ehrlich S.D."/>
            <person name="Emmerson P.T."/>
            <person name="Entian K.-D."/>
            <person name="Errington J."/>
            <person name="Fabret C."/>
            <person name="Ferrari E."/>
            <person name="Foulger D."/>
            <person name="Fritz C."/>
            <person name="Fujita M."/>
            <person name="Fujita Y."/>
            <person name="Fuma S."/>
            <person name="Galizzi A."/>
            <person name="Galleron N."/>
            <person name="Ghim S.-Y."/>
            <person name="Glaser P."/>
            <person name="Goffeau A."/>
            <person name="Golightly E.J."/>
            <person name="Grandi G."/>
            <person name="Guiseppi G."/>
            <person name="Guy B.J."/>
            <person name="Haga K."/>
            <person name="Haiech J."/>
            <person name="Harwood C.R."/>
            <person name="Henaut A."/>
            <person name="Hilbert H."/>
            <person name="Holsappel S."/>
            <person name="Hosono S."/>
            <person name="Hullo M.-F."/>
            <person name="Itaya M."/>
            <person name="Jones L.-M."/>
            <person name="Joris B."/>
            <person name="Karamata D."/>
            <person name="Kasahara Y."/>
            <person name="Klaerr-Blanchard M."/>
            <person name="Klein C."/>
            <person name="Kobayashi Y."/>
            <person name="Koetter P."/>
            <person name="Koningstein G."/>
            <person name="Krogh S."/>
            <person name="Kumano M."/>
            <person name="Kurita K."/>
            <person name="Lapidus A."/>
            <person name="Lardinois S."/>
            <person name="Lauber J."/>
            <person name="Lazarevic V."/>
            <person name="Lee S.-M."/>
            <person name="Levine A."/>
            <person name="Liu H."/>
            <person name="Masuda S."/>
            <person name="Mauel C."/>
            <person name="Medigue C."/>
            <person name="Medina N."/>
            <person name="Mellado R.P."/>
            <person name="Mizuno M."/>
            <person name="Moestl D."/>
            <person name="Nakai S."/>
            <person name="Noback M."/>
            <person name="Noone D."/>
            <person name="O'Reilly M."/>
            <person name="Ogawa K."/>
            <person name="Ogiwara A."/>
            <person name="Oudega B."/>
            <person name="Park S.-H."/>
            <person name="Parro V."/>
            <person name="Pohl T.M."/>
            <person name="Portetelle D."/>
            <person name="Porwollik S."/>
            <person name="Prescott A.M."/>
            <person name="Presecan E."/>
            <person name="Pujic P."/>
            <person name="Purnelle B."/>
            <person name="Rapoport G."/>
            <person name="Rey M."/>
            <person name="Reynolds S."/>
            <person name="Rieger M."/>
            <person name="Rivolta C."/>
            <person name="Rocha E."/>
            <person name="Roche B."/>
            <person name="Rose M."/>
            <person name="Sadaie Y."/>
            <person name="Sato T."/>
            <person name="Scanlan E."/>
            <person name="Schleich S."/>
            <person name="Schroeter R."/>
            <person name="Scoffone F."/>
            <person name="Sekiguchi J."/>
            <person name="Sekowska A."/>
            <person name="Seror S.J."/>
            <person name="Serror P."/>
            <person name="Shin B.-S."/>
            <person name="Soldo B."/>
            <person name="Sorokin A."/>
            <person name="Tacconi E."/>
            <person name="Takagi T."/>
            <person name="Takahashi H."/>
            <person name="Takemaru K."/>
            <person name="Takeuchi M."/>
            <person name="Tamakoshi A."/>
            <person name="Tanaka T."/>
            <person name="Terpstra P."/>
            <person name="Tognoni A."/>
            <person name="Tosato V."/>
            <person name="Uchiyama S."/>
            <person name="Vandenbol M."/>
            <person name="Vannier F."/>
            <person name="Vassarotti A."/>
            <person name="Viari A."/>
            <person name="Wambutt R."/>
            <person name="Wedler E."/>
            <person name="Wedler H."/>
            <person name="Weitzenegger T."/>
            <person name="Winters P."/>
            <person name="Wipat A."/>
            <person name="Yamamoto H."/>
            <person name="Yamane K."/>
            <person name="Yasumoto K."/>
            <person name="Yata K."/>
            <person name="Yoshida K."/>
            <person name="Yoshikawa H.-F."/>
            <person name="Zumstein E."/>
            <person name="Yoshikawa H."/>
            <person name="Danchin A."/>
        </authorList>
    </citation>
    <scope>NUCLEOTIDE SEQUENCE [LARGE SCALE GENOMIC DNA]</scope>
    <source>
        <strain>168</strain>
    </source>
</reference>
<reference key="3">
    <citation type="journal article" date="2018" name="Front. Microbiol.">
        <title>Phosphorylation of the Bacillus subtilis Replication Controller YabA Plays a Role in Regulation of Sporulation and Biofilm Formation.</title>
        <authorList>
            <person name="Garcia Garcia T."/>
            <person name="Ventroux M."/>
            <person name="Derouiche A."/>
            <person name="Bidnenko V."/>
            <person name="Correia Santos S."/>
            <person name="Henry C."/>
            <person name="Mijakovic I."/>
            <person name="Noirot-Gros M.F."/>
            <person name="Poncet S."/>
        </authorList>
    </citation>
    <scope>FUNCTION</scope>
    <scope>CATALYTIC ACTIVITY</scope>
    <scope>DEVELOPMENTAL STAGE</scope>
    <scope>AUTOPHOSPHORYLATES</scope>
    <scope>DISRUPTION PHENOTYPE</scope>
    <source>
        <strain>168</strain>
    </source>
</reference>
<accession>P37562</accession>
<accession>O31415</accession>
<gene>
    <name type="primary">yabT</name>
    <name type="ordered locus">BSU00660</name>
</gene>
<comment type="function">
    <text evidence="3">Plays a role in the cell's commitment to sporulation; phosphorylates DNA replication initiation-control protein YabA (PubMed:29619013). Deletion of this kinase delays entry into sporulation but does not affect final spore yield (PubMed:29619013). Overexpression decreases biofilm formation; phosphorylation of YabA probably prevents biofilm formation (PubMed:29619013).</text>
</comment>
<comment type="catalytic activity">
    <reaction>
        <text>L-seryl-[protein] + ATP = O-phospho-L-seryl-[protein] + ADP + H(+)</text>
        <dbReference type="Rhea" id="RHEA:17989"/>
        <dbReference type="Rhea" id="RHEA-COMP:9863"/>
        <dbReference type="Rhea" id="RHEA-COMP:11604"/>
        <dbReference type="ChEBI" id="CHEBI:15378"/>
        <dbReference type="ChEBI" id="CHEBI:29999"/>
        <dbReference type="ChEBI" id="CHEBI:30616"/>
        <dbReference type="ChEBI" id="CHEBI:83421"/>
        <dbReference type="ChEBI" id="CHEBI:456216"/>
        <dbReference type="EC" id="2.7.11.1"/>
    </reaction>
</comment>
<comment type="catalytic activity">
    <reaction evidence="3">
        <text>L-threonyl-[protein] + ATP = O-phospho-L-threonyl-[protein] + ADP + H(+)</text>
        <dbReference type="Rhea" id="RHEA:46608"/>
        <dbReference type="Rhea" id="RHEA-COMP:11060"/>
        <dbReference type="Rhea" id="RHEA-COMP:11605"/>
        <dbReference type="ChEBI" id="CHEBI:15378"/>
        <dbReference type="ChEBI" id="CHEBI:30013"/>
        <dbReference type="ChEBI" id="CHEBI:30616"/>
        <dbReference type="ChEBI" id="CHEBI:61977"/>
        <dbReference type="ChEBI" id="CHEBI:456216"/>
        <dbReference type="EC" id="2.7.11.1"/>
    </reaction>
    <physiologicalReaction direction="left-to-right" evidence="3">
        <dbReference type="Rhea" id="RHEA:46609"/>
    </physiologicalReaction>
</comment>
<comment type="interaction">
    <interactant intactId="EBI-9303331">
        <id>P37562</id>
    </interactant>
    <interactant intactId="EBI-6667154">
        <id>O34507</id>
        <label>prkC</label>
    </interactant>
    <organismsDiffer>false</organismsDiffer>
    <experiments>2</experiments>
</comment>
<comment type="interaction">
    <interactant intactId="EBI-9303331">
        <id>P37562</id>
    </interactant>
    <interactant intactId="EBI-5242400">
        <id>P45870</id>
        <label>racA</label>
    </interactant>
    <organismsDiffer>false</organismsDiffer>
    <experiments>3</experiments>
</comment>
<comment type="interaction">
    <interactant intactId="EBI-9303331">
        <id>P37562</id>
    </interactant>
    <interactant intactId="EBI-1535844">
        <id>P16971</id>
        <label>recA</label>
    </interactant>
    <organismsDiffer>false</organismsDiffer>
    <experiments>2</experiments>
</comment>
<comment type="interaction">
    <interactant intactId="EBI-9303331">
        <id>P37562</id>
    </interactant>
    <interactant intactId="EBI-5255200">
        <id>O31435</id>
        <label>ybdM</label>
    </interactant>
    <organismsDiffer>false</organismsDiffer>
    <experiments>2</experiments>
</comment>
<comment type="interaction">
    <interactant intactId="EBI-9303331">
        <id>P37562</id>
    </interactant>
    <interactant intactId="EBI-9302929">
        <id>P96716</id>
        <label>ywqD</label>
    </interactant>
    <organismsDiffer>false</organismsDiffer>
    <experiments>3</experiments>
</comment>
<comment type="developmental stage">
    <text evidence="3">Transcribed during the early stages of sporulation with a peak at 3 hours after sporulation onset, during biofilm formation and following glucose exhaustion (PubMed:29619013).</text>
</comment>
<comment type="PTM">
    <text evidence="3">Autophosphorylated (PubMed:29619013).</text>
</comment>
<comment type="disruption phenotype">
    <text evidence="3">No change in replication initiation, no change in sporulation efficiency, wild-type biofilm formation (PubMed:29619013).</text>
</comment>
<comment type="similarity">
    <text evidence="1">Belongs to the protein kinase superfamily. Ser/Thr protein kinase family.</text>
</comment>
<comment type="sequence caution" evidence="4">
    <conflict type="erroneous initiation">
        <sequence resource="EMBL-CDS" id="BAA05301"/>
    </conflict>
    <text>Truncated N-terminus.</text>
</comment>
<evidence type="ECO:0000255" key="1">
    <source>
        <dbReference type="PROSITE-ProRule" id="PRU00159"/>
    </source>
</evidence>
<evidence type="ECO:0000256" key="2">
    <source>
        <dbReference type="SAM" id="MobiDB-lite"/>
    </source>
</evidence>
<evidence type="ECO:0000269" key="3">
    <source>
    </source>
</evidence>
<evidence type="ECO:0000305" key="4"/>
<evidence type="ECO:0007829" key="5">
    <source>
        <dbReference type="PDB" id="6G4J"/>
    </source>
</evidence>
<protein>
    <recommendedName>
        <fullName>Serine/threonine-protein kinase YabT</fullName>
        <ecNumber evidence="3">2.7.11.1</ecNumber>
    </recommendedName>
</protein>
<proteinExistence type="evidence at protein level"/>
<feature type="chain" id="PRO_0000171182" description="Serine/threonine-protein kinase YabT">
    <location>
        <begin position="1"/>
        <end position="338"/>
    </location>
</feature>
<feature type="domain" description="Protein kinase" evidence="1">
    <location>
        <begin position="28"/>
        <end position="286"/>
    </location>
</feature>
<feature type="region of interest" description="Disordered" evidence="2">
    <location>
        <begin position="266"/>
        <end position="312"/>
    </location>
</feature>
<feature type="compositionally biased region" description="Basic residues" evidence="2">
    <location>
        <begin position="289"/>
        <end position="309"/>
    </location>
</feature>
<feature type="active site" description="Proton acceptor" evidence="1">
    <location>
        <position position="148"/>
    </location>
</feature>
<feature type="binding site" evidence="1">
    <location>
        <begin position="34"/>
        <end position="42"/>
    </location>
    <ligand>
        <name>ATP</name>
        <dbReference type="ChEBI" id="CHEBI:30616"/>
    </ligand>
</feature>
<feature type="binding site" evidence="1">
    <location>
        <position position="55"/>
    </location>
    <ligand>
        <name>ATP</name>
        <dbReference type="ChEBI" id="CHEBI:30616"/>
    </ligand>
</feature>
<feature type="helix" evidence="5">
    <location>
        <begin position="4"/>
        <end position="12"/>
    </location>
</feature>
<feature type="strand" evidence="5">
    <location>
        <begin position="18"/>
        <end position="20"/>
    </location>
</feature>
<feature type="turn" evidence="5">
    <location>
        <begin position="22"/>
        <end position="24"/>
    </location>
</feature>
<feature type="strand" evidence="5">
    <location>
        <begin position="27"/>
        <end position="37"/>
    </location>
</feature>
<feature type="strand" evidence="5">
    <location>
        <begin position="40"/>
        <end position="47"/>
    </location>
</feature>
<feature type="strand" evidence="5">
    <location>
        <begin position="50"/>
        <end position="58"/>
    </location>
</feature>
<feature type="helix" evidence="5">
    <location>
        <begin position="60"/>
        <end position="74"/>
    </location>
</feature>
<feature type="strand" evidence="5">
    <location>
        <begin position="76"/>
        <end position="78"/>
    </location>
</feature>
<feature type="strand" evidence="5">
    <location>
        <begin position="85"/>
        <end position="93"/>
    </location>
</feature>
<feature type="turn" evidence="5">
    <location>
        <begin position="94"/>
        <end position="97"/>
    </location>
</feature>
<feature type="strand" evidence="5">
    <location>
        <begin position="98"/>
        <end position="105"/>
    </location>
</feature>
<feature type="helix" evidence="5">
    <location>
        <begin position="113"/>
        <end position="120"/>
    </location>
</feature>
<feature type="helix" evidence="5">
    <location>
        <begin position="124"/>
        <end position="141"/>
    </location>
</feature>
<feature type="helix" evidence="5">
    <location>
        <begin position="151"/>
        <end position="153"/>
    </location>
</feature>
<feature type="strand" evidence="5">
    <location>
        <begin position="154"/>
        <end position="157"/>
    </location>
</feature>
<feature type="turn" evidence="5">
    <location>
        <begin position="158"/>
        <end position="161"/>
    </location>
</feature>
<feature type="strand" evidence="5">
    <location>
        <begin position="162"/>
        <end position="166"/>
    </location>
</feature>
<feature type="helix" evidence="5">
    <location>
        <begin position="183"/>
        <end position="185"/>
    </location>
</feature>
<feature type="turn" evidence="5">
    <location>
        <begin position="187"/>
        <end position="191"/>
    </location>
</feature>
<feature type="helix" evidence="5">
    <location>
        <begin position="199"/>
        <end position="215"/>
    </location>
</feature>
<feature type="helix" evidence="5">
    <location>
        <begin position="225"/>
        <end position="234"/>
    </location>
</feature>
<feature type="helix" evidence="5">
    <location>
        <begin position="237"/>
        <end position="241"/>
    </location>
</feature>
<feature type="helix" evidence="5">
    <location>
        <begin position="243"/>
        <end position="251"/>
    </location>
</feature>
<feature type="helix" evidence="5">
    <location>
        <begin position="257"/>
        <end position="272"/>
    </location>
</feature>